<protein>
    <recommendedName>
        <fullName evidence="1">Hydrogenase maturation factor HybF</fullName>
    </recommendedName>
</protein>
<accession>Q8XBW1</accession>
<sequence length="113" mass="12683">MHELSLCQSAVEIIQRQAEQHDVKRVTAVWLEIGALSCVEESAVRFSFEIVCHGTVAQGCDLHIVYKPAQAWCWDCSQVVEVHQHDAQCPLCHGERLRVDTGDSLIVKSIEVE</sequence>
<evidence type="ECO:0000255" key="1">
    <source>
        <dbReference type="HAMAP-Rule" id="MF_02099"/>
    </source>
</evidence>
<feature type="chain" id="PRO_0000129065" description="Hydrogenase maturation factor HybF">
    <location>
        <begin position="1"/>
        <end position="113"/>
    </location>
</feature>
<feature type="binding site" evidence="1">
    <location>
        <position position="2"/>
    </location>
    <ligand>
        <name>Ni(2+)</name>
        <dbReference type="ChEBI" id="CHEBI:49786"/>
    </ligand>
</feature>
<feature type="binding site" evidence="1">
    <location>
        <position position="3"/>
    </location>
    <ligand>
        <name>Ni(2+)</name>
        <dbReference type="ChEBI" id="CHEBI:49786"/>
    </ligand>
</feature>
<feature type="binding site" evidence="1">
    <location>
        <position position="73"/>
    </location>
    <ligand>
        <name>Zn(2+)</name>
        <dbReference type="ChEBI" id="CHEBI:29105"/>
    </ligand>
</feature>
<feature type="binding site" evidence="1">
    <location>
        <position position="76"/>
    </location>
    <ligand>
        <name>Zn(2+)</name>
        <dbReference type="ChEBI" id="CHEBI:29105"/>
    </ligand>
</feature>
<feature type="binding site" evidence="1">
    <location>
        <position position="89"/>
    </location>
    <ligand>
        <name>Zn(2+)</name>
        <dbReference type="ChEBI" id="CHEBI:29105"/>
    </ligand>
</feature>
<feature type="binding site" evidence="1">
    <location>
        <position position="92"/>
    </location>
    <ligand>
        <name>Zn(2+)</name>
        <dbReference type="ChEBI" id="CHEBI:29105"/>
    </ligand>
</feature>
<organism>
    <name type="scientific">Escherichia coli O157:H7</name>
    <dbReference type="NCBI Taxonomy" id="83334"/>
    <lineage>
        <taxon>Bacteria</taxon>
        <taxon>Pseudomonadati</taxon>
        <taxon>Pseudomonadota</taxon>
        <taxon>Gammaproteobacteria</taxon>
        <taxon>Enterobacterales</taxon>
        <taxon>Enterobacteriaceae</taxon>
        <taxon>Escherichia</taxon>
    </lineage>
</organism>
<dbReference type="EMBL" id="AE005174">
    <property type="protein sequence ID" value="AAG58128.1"/>
    <property type="molecule type" value="Genomic_DNA"/>
</dbReference>
<dbReference type="EMBL" id="BA000007">
    <property type="protein sequence ID" value="BAB37299.1"/>
    <property type="molecule type" value="Genomic_DNA"/>
</dbReference>
<dbReference type="PIR" id="D85958">
    <property type="entry name" value="D85958"/>
</dbReference>
<dbReference type="PIR" id="D91113">
    <property type="entry name" value="D91113"/>
</dbReference>
<dbReference type="RefSeq" id="NP_311903.1">
    <property type="nucleotide sequence ID" value="NC_002695.1"/>
</dbReference>
<dbReference type="SMR" id="Q8XBW1"/>
<dbReference type="STRING" id="155864.Z4345"/>
<dbReference type="GeneID" id="916300"/>
<dbReference type="KEGG" id="ece:Z4345"/>
<dbReference type="KEGG" id="ecs:ECs_3876"/>
<dbReference type="PATRIC" id="fig|386585.9.peg.4043"/>
<dbReference type="eggNOG" id="COG0375">
    <property type="taxonomic scope" value="Bacteria"/>
</dbReference>
<dbReference type="HOGENOM" id="CLU_126929_0_0_6"/>
<dbReference type="OMA" id="ILLCPCG"/>
<dbReference type="Proteomes" id="UP000000558">
    <property type="component" value="Chromosome"/>
</dbReference>
<dbReference type="Proteomes" id="UP000002519">
    <property type="component" value="Chromosome"/>
</dbReference>
<dbReference type="GO" id="GO:0016151">
    <property type="term" value="F:nickel cation binding"/>
    <property type="evidence" value="ECO:0007669"/>
    <property type="project" value="UniProtKB-UniRule"/>
</dbReference>
<dbReference type="GO" id="GO:0008270">
    <property type="term" value="F:zinc ion binding"/>
    <property type="evidence" value="ECO:0007669"/>
    <property type="project" value="UniProtKB-UniRule"/>
</dbReference>
<dbReference type="GO" id="GO:0051604">
    <property type="term" value="P:protein maturation"/>
    <property type="evidence" value="ECO:0007669"/>
    <property type="project" value="InterPro"/>
</dbReference>
<dbReference type="GO" id="GO:0036211">
    <property type="term" value="P:protein modification process"/>
    <property type="evidence" value="ECO:0007669"/>
    <property type="project" value="UniProtKB-UniRule"/>
</dbReference>
<dbReference type="FunFam" id="3.30.2320.80:FF:000001">
    <property type="entry name" value="Hydrogenase maturation factor HypA"/>
    <property type="match status" value="1"/>
</dbReference>
<dbReference type="Gene3D" id="3.30.2320.80">
    <property type="match status" value="1"/>
</dbReference>
<dbReference type="HAMAP" id="MF_02099">
    <property type="entry name" value="HybF_subfam"/>
    <property type="match status" value="1"/>
</dbReference>
<dbReference type="HAMAP" id="MF_00213">
    <property type="entry name" value="HypA_HybF"/>
    <property type="match status" value="1"/>
</dbReference>
<dbReference type="InterPro" id="IPR039002">
    <property type="entry name" value="HybF"/>
</dbReference>
<dbReference type="InterPro" id="IPR020538">
    <property type="entry name" value="Hydgase_Ni_incorp_HypA/HybF_CS"/>
</dbReference>
<dbReference type="InterPro" id="IPR000688">
    <property type="entry name" value="HypA/HybF"/>
</dbReference>
<dbReference type="NCBIfam" id="TIGR00100">
    <property type="entry name" value="hypA"/>
    <property type="match status" value="1"/>
</dbReference>
<dbReference type="NCBIfam" id="NF002979">
    <property type="entry name" value="PRK03681.1"/>
    <property type="match status" value="1"/>
</dbReference>
<dbReference type="NCBIfam" id="NF009046">
    <property type="entry name" value="PRK12380.1"/>
    <property type="match status" value="1"/>
</dbReference>
<dbReference type="PANTHER" id="PTHR34535:SF4">
    <property type="entry name" value="HYDROGENASE MATURATION FACTOR HYBF"/>
    <property type="match status" value="1"/>
</dbReference>
<dbReference type="PANTHER" id="PTHR34535">
    <property type="entry name" value="HYDROGENASE MATURATION FACTOR HYPA"/>
    <property type="match status" value="1"/>
</dbReference>
<dbReference type="Pfam" id="PF01155">
    <property type="entry name" value="HypA"/>
    <property type="match status" value="1"/>
</dbReference>
<dbReference type="PIRSF" id="PIRSF004761">
    <property type="entry name" value="Hydrgn_mat_HypA"/>
    <property type="match status" value="1"/>
</dbReference>
<dbReference type="PROSITE" id="PS01249">
    <property type="entry name" value="HYPA"/>
    <property type="match status" value="1"/>
</dbReference>
<keyword id="KW-0479">Metal-binding</keyword>
<keyword id="KW-0533">Nickel</keyword>
<keyword id="KW-1185">Reference proteome</keyword>
<keyword id="KW-0862">Zinc</keyword>
<reference key="1">
    <citation type="journal article" date="2001" name="Nature">
        <title>Genome sequence of enterohaemorrhagic Escherichia coli O157:H7.</title>
        <authorList>
            <person name="Perna N.T."/>
            <person name="Plunkett G. III"/>
            <person name="Burland V."/>
            <person name="Mau B."/>
            <person name="Glasner J.D."/>
            <person name="Rose D.J."/>
            <person name="Mayhew G.F."/>
            <person name="Evans P.S."/>
            <person name="Gregor J."/>
            <person name="Kirkpatrick H.A."/>
            <person name="Posfai G."/>
            <person name="Hackett J."/>
            <person name="Klink S."/>
            <person name="Boutin A."/>
            <person name="Shao Y."/>
            <person name="Miller L."/>
            <person name="Grotbeck E.J."/>
            <person name="Davis N.W."/>
            <person name="Lim A."/>
            <person name="Dimalanta E.T."/>
            <person name="Potamousis K."/>
            <person name="Apodaca J."/>
            <person name="Anantharaman T.S."/>
            <person name="Lin J."/>
            <person name="Yen G."/>
            <person name="Schwartz D.C."/>
            <person name="Welch R.A."/>
            <person name="Blattner F.R."/>
        </authorList>
    </citation>
    <scope>NUCLEOTIDE SEQUENCE [LARGE SCALE GENOMIC DNA]</scope>
    <source>
        <strain>O157:H7 / EDL933 / ATCC 700927 / EHEC</strain>
    </source>
</reference>
<reference key="2">
    <citation type="journal article" date="2001" name="DNA Res.">
        <title>Complete genome sequence of enterohemorrhagic Escherichia coli O157:H7 and genomic comparison with a laboratory strain K-12.</title>
        <authorList>
            <person name="Hayashi T."/>
            <person name="Makino K."/>
            <person name="Ohnishi M."/>
            <person name="Kurokawa K."/>
            <person name="Ishii K."/>
            <person name="Yokoyama K."/>
            <person name="Han C.-G."/>
            <person name="Ohtsubo E."/>
            <person name="Nakayama K."/>
            <person name="Murata T."/>
            <person name="Tanaka M."/>
            <person name="Tobe T."/>
            <person name="Iida T."/>
            <person name="Takami H."/>
            <person name="Honda T."/>
            <person name="Sasakawa C."/>
            <person name="Ogasawara N."/>
            <person name="Yasunaga T."/>
            <person name="Kuhara S."/>
            <person name="Shiba T."/>
            <person name="Hattori M."/>
            <person name="Shinagawa H."/>
        </authorList>
    </citation>
    <scope>NUCLEOTIDE SEQUENCE [LARGE SCALE GENOMIC DNA]</scope>
    <source>
        <strain>O157:H7 / Sakai / RIMD 0509952 / EHEC</strain>
    </source>
</reference>
<proteinExistence type="inferred from homology"/>
<comment type="function">
    <text evidence="1">Involved in the maturation of [NiFe] hydrogenases. Required for nickel insertion into the metal center of the hydrogenase.</text>
</comment>
<comment type="similarity">
    <text evidence="1">Belongs to the HypA/HybF family. HybF subfamily.</text>
</comment>
<name>HYBF_ECO57</name>
<gene>
    <name evidence="1" type="primary">hybF</name>
    <name type="ordered locus">Z4345</name>
    <name type="ordered locus">ECs3876</name>
</gene>